<feature type="chain" id="PRO_0000300680" description="Low molecular weight protein-tyrosine-phosphatase PtpB">
    <location>
        <begin position="1"/>
        <end position="139"/>
    </location>
</feature>
<feature type="active site" description="Nucleophile" evidence="2">
    <location>
        <position position="7"/>
    </location>
</feature>
<feature type="active site" evidence="2">
    <location>
        <position position="13"/>
    </location>
</feature>
<feature type="active site" description="Proton donor" evidence="2">
    <location>
        <position position="111"/>
    </location>
</feature>
<gene>
    <name type="primary">ptpB</name>
    <name type="ordered locus">SE_1712</name>
</gene>
<proteinExistence type="inferred from homology"/>
<keyword id="KW-0378">Hydrolase</keyword>
<keyword id="KW-0904">Protein phosphatase</keyword>
<accession>Q8CNI9</accession>
<protein>
    <recommendedName>
        <fullName>Low molecular weight protein-tyrosine-phosphatase PtpB</fullName>
        <ecNumber>3.1.3.48</ecNumber>
    </recommendedName>
    <alternativeName>
        <fullName>Phosphotyrosine phosphatase B</fullName>
        <shortName>PTPase B</shortName>
    </alternativeName>
</protein>
<reference key="1">
    <citation type="journal article" date="2003" name="Mol. Microbiol.">
        <title>Genome-based analysis of virulence genes in a non-biofilm-forming Staphylococcus epidermidis strain (ATCC 12228).</title>
        <authorList>
            <person name="Zhang Y.-Q."/>
            <person name="Ren S.-X."/>
            <person name="Li H.-L."/>
            <person name="Wang Y.-X."/>
            <person name="Fu G."/>
            <person name="Yang J."/>
            <person name="Qin Z.-Q."/>
            <person name="Miao Y.-G."/>
            <person name="Wang W.-Y."/>
            <person name="Chen R.-S."/>
            <person name="Shen Y."/>
            <person name="Chen Z."/>
            <person name="Yuan Z.-H."/>
            <person name="Zhao G.-P."/>
            <person name="Qu D."/>
            <person name="Danchin A."/>
            <person name="Wen Y.-M."/>
        </authorList>
    </citation>
    <scope>NUCLEOTIDE SEQUENCE [LARGE SCALE GENOMIC DNA]</scope>
    <source>
        <strain>ATCC 12228 / FDA PCI 1200</strain>
    </source>
</reference>
<dbReference type="EC" id="3.1.3.48"/>
<dbReference type="EMBL" id="AE015929">
    <property type="protein sequence ID" value="AAO05311.1"/>
    <property type="molecule type" value="Genomic_DNA"/>
</dbReference>
<dbReference type="RefSeq" id="NP_765267.1">
    <property type="nucleotide sequence ID" value="NC_004461.1"/>
</dbReference>
<dbReference type="RefSeq" id="WP_002457126.1">
    <property type="nucleotide sequence ID" value="NZ_WBME01000021.1"/>
</dbReference>
<dbReference type="SMR" id="Q8CNI9"/>
<dbReference type="KEGG" id="sep:SE_1712"/>
<dbReference type="PATRIC" id="fig|176280.10.peg.1673"/>
<dbReference type="eggNOG" id="COG0394">
    <property type="taxonomic scope" value="Bacteria"/>
</dbReference>
<dbReference type="HOGENOM" id="CLU_071415_1_2_9"/>
<dbReference type="OrthoDB" id="9784339at2"/>
<dbReference type="Proteomes" id="UP000001411">
    <property type="component" value="Chromosome"/>
</dbReference>
<dbReference type="GO" id="GO:0004725">
    <property type="term" value="F:protein tyrosine phosphatase activity"/>
    <property type="evidence" value="ECO:0007669"/>
    <property type="project" value="UniProtKB-EC"/>
</dbReference>
<dbReference type="CDD" id="cd16344">
    <property type="entry name" value="LMWPAP"/>
    <property type="match status" value="1"/>
</dbReference>
<dbReference type="Gene3D" id="3.40.50.2300">
    <property type="match status" value="1"/>
</dbReference>
<dbReference type="InterPro" id="IPR050438">
    <property type="entry name" value="LMW_PTPase"/>
</dbReference>
<dbReference type="InterPro" id="IPR023485">
    <property type="entry name" value="Ptyr_pPase"/>
</dbReference>
<dbReference type="InterPro" id="IPR036196">
    <property type="entry name" value="Ptyr_pPase_sf"/>
</dbReference>
<dbReference type="InterPro" id="IPR017867">
    <property type="entry name" value="Tyr_phospatase_low_mol_wt"/>
</dbReference>
<dbReference type="PANTHER" id="PTHR11717">
    <property type="entry name" value="LOW MOLECULAR WEIGHT PROTEIN TYROSINE PHOSPHATASE"/>
    <property type="match status" value="1"/>
</dbReference>
<dbReference type="PANTHER" id="PTHR11717:SF31">
    <property type="entry name" value="LOW MOLECULAR WEIGHT PROTEIN-TYROSINE-PHOSPHATASE ETP-RELATED"/>
    <property type="match status" value="1"/>
</dbReference>
<dbReference type="Pfam" id="PF01451">
    <property type="entry name" value="LMWPc"/>
    <property type="match status" value="1"/>
</dbReference>
<dbReference type="PRINTS" id="PR00719">
    <property type="entry name" value="LMWPTPASE"/>
</dbReference>
<dbReference type="SMART" id="SM00226">
    <property type="entry name" value="LMWPc"/>
    <property type="match status" value="1"/>
</dbReference>
<dbReference type="SUPFAM" id="SSF52788">
    <property type="entry name" value="Phosphotyrosine protein phosphatases I"/>
    <property type="match status" value="1"/>
</dbReference>
<comment type="function">
    <text evidence="1">Dephosphorylates the phosphotyrosine-containing proteins.</text>
</comment>
<comment type="catalytic activity">
    <reaction>
        <text>O-phospho-L-tyrosyl-[protein] + H2O = L-tyrosyl-[protein] + phosphate</text>
        <dbReference type="Rhea" id="RHEA:10684"/>
        <dbReference type="Rhea" id="RHEA-COMP:10136"/>
        <dbReference type="Rhea" id="RHEA-COMP:20101"/>
        <dbReference type="ChEBI" id="CHEBI:15377"/>
        <dbReference type="ChEBI" id="CHEBI:43474"/>
        <dbReference type="ChEBI" id="CHEBI:46858"/>
        <dbReference type="ChEBI" id="CHEBI:61978"/>
        <dbReference type="EC" id="3.1.3.48"/>
    </reaction>
</comment>
<comment type="similarity">
    <text evidence="3">Belongs to the low molecular weight phosphotyrosine protein phosphatase family.</text>
</comment>
<evidence type="ECO:0000250" key="1"/>
<evidence type="ECO:0000250" key="2">
    <source>
        <dbReference type="UniProtKB" id="P11064"/>
    </source>
</evidence>
<evidence type="ECO:0000305" key="3"/>
<organism>
    <name type="scientific">Staphylococcus epidermidis (strain ATCC 12228 / FDA PCI 1200)</name>
    <dbReference type="NCBI Taxonomy" id="176280"/>
    <lineage>
        <taxon>Bacteria</taxon>
        <taxon>Bacillati</taxon>
        <taxon>Bacillota</taxon>
        <taxon>Bacilli</taxon>
        <taxon>Bacillales</taxon>
        <taxon>Staphylococcaceae</taxon>
        <taxon>Staphylococcus</taxon>
    </lineage>
</organism>
<name>PTPB_STAES</name>
<sequence>MKIIFVCSGNTCRSPLAESIAKSLLPHDSIASRGLFAVEGQAISKESLELIHKYDLPEPSRAQAFHIDDLDADIILTMTQAHKDLIFSMYGRQSNVFTLNEYVGDTQEIDDPFGGSFDVYEQTYTKIYDLVDKIKFKHE</sequence>